<name>AAXA_CHLT2</name>
<evidence type="ECO:0000250" key="1"/>
<evidence type="ECO:0000255" key="2"/>
<evidence type="ECO:0000305" key="3"/>
<proteinExistence type="inferred from homology"/>
<reference key="1">
    <citation type="journal article" date="2008" name="Genome Res.">
        <title>Chlamydia trachomatis: genome sequence analysis of lymphogranuloma venereum isolates.</title>
        <authorList>
            <person name="Thomson N.R."/>
            <person name="Holden M.T.G."/>
            <person name="Carder C."/>
            <person name="Lennard N."/>
            <person name="Lockey S.J."/>
            <person name="Marsh P."/>
            <person name="Skipp P."/>
            <person name="O'Connor C.D."/>
            <person name="Goodhead I."/>
            <person name="Norbertzcak H."/>
            <person name="Harris B."/>
            <person name="Ormond D."/>
            <person name="Rance R."/>
            <person name="Quail M.A."/>
            <person name="Parkhill J."/>
            <person name="Stephens R.S."/>
            <person name="Clarke I.N."/>
        </authorList>
    </citation>
    <scope>NUCLEOTIDE SEQUENCE [LARGE SCALE GENOMIC DNA]</scope>
    <source>
        <strain>ATCC VR-902B / DSM 19102 / 434/Bu</strain>
    </source>
</reference>
<comment type="function">
    <text evidence="1">Facilitates L-arginine uptake, as part of the AaxABC system. The arginine uptake by the bacterium in the macrophage may be a virulence factor against the host innate immune response (By similarity).</text>
</comment>
<comment type="subcellular location">
    <subcellularLocation>
        <location evidence="1">Cell outer membrane</location>
        <topology evidence="1">Multi-pass membrane protein</topology>
    </subcellularLocation>
</comment>
<comment type="similarity">
    <text evidence="3">Belongs to the OprB family.</text>
</comment>
<comment type="sequence caution" evidence="3">
    <conflict type="erroneous initiation">
        <sequence resource="EMBL-CDS" id="CAP04067"/>
    </conflict>
</comment>
<organism>
    <name type="scientific">Chlamydia trachomatis serovar L2 (strain ATCC VR-902B / DSM 19102 / 434/Bu)</name>
    <dbReference type="NCBI Taxonomy" id="471472"/>
    <lineage>
        <taxon>Bacteria</taxon>
        <taxon>Pseudomonadati</taxon>
        <taxon>Chlamydiota</taxon>
        <taxon>Chlamydiia</taxon>
        <taxon>Chlamydiales</taxon>
        <taxon>Chlamydiaceae</taxon>
        <taxon>Chlamydia/Chlamydophila group</taxon>
        <taxon>Chlamydia</taxon>
    </lineage>
</organism>
<gene>
    <name type="primary">aaxA</name>
    <name type="ordered locus">CTL0626</name>
</gene>
<keyword id="KW-0029">Amino-acid transport</keyword>
<keyword id="KW-0998">Cell outer membrane</keyword>
<keyword id="KW-0406">Ion transport</keyword>
<keyword id="KW-0472">Membrane</keyword>
<keyword id="KW-0626">Porin</keyword>
<keyword id="KW-0732">Signal</keyword>
<keyword id="KW-0812">Transmembrane</keyword>
<keyword id="KW-1134">Transmembrane beta strand</keyword>
<keyword id="KW-0813">Transport</keyword>
<keyword id="KW-0843">Virulence</keyword>
<sequence length="461" mass="51517">MSFRSVLLTALLSLSFTTTMQAAHHHYHRYTDKLHRQNHKKDLISPKPTEQEACNTPSLSKELIPLSEQRGLLSPIYDFISERLCLHGVSVRNLKQALKNSAGTQIALDWSILPQWFNPRVSHAPKLSIRDFGYSAHQTVTEATPPCWQNCFNPSAAVTIYDSSYGKGVFQISYTLVHYWRENAATAGDAMMLAGSINDYPSRQNIFSQFTFSQNFPNERVSLTIGQYSLYAIDGTLYNNDQQLGFISYALSQNPTATYSSGSLGAYLQVAPTASTSLQIGFQDAYNISGSSIKWSNLTKNRYNFHGFASWAPRCCLGSGQYSVLLYVTRQVPEQMEQTMGWSVNASQYISSKLYVFGRYSGVTGHVFPINRTYSCGMVSANLFNRNPQDLFGIACAFNNVHLSASPNAKRKYETVIEGFATIGCGPYLSFAPDFQLYLYPALRPNKQSARVYSVRANLAI</sequence>
<protein>
    <recommendedName>
        <fullName>Porin AaxA</fullName>
    </recommendedName>
    <alternativeName>
        <fullName>Outer membrane protein AaxA</fullName>
    </alternativeName>
</protein>
<dbReference type="EMBL" id="AM884176">
    <property type="protein sequence ID" value="CAP04067.1"/>
    <property type="status" value="ALT_INIT"/>
    <property type="molecule type" value="Genomic_DNA"/>
</dbReference>
<dbReference type="RefSeq" id="YP_001654701.1">
    <property type="nucleotide sequence ID" value="NC_010287.1"/>
</dbReference>
<dbReference type="KEGG" id="ctb:CTL0626"/>
<dbReference type="PATRIC" id="fig|471472.4.peg.675"/>
<dbReference type="HOGENOM" id="CLU_619231_0_0_0"/>
<dbReference type="Proteomes" id="UP001154402">
    <property type="component" value="Chromosome"/>
</dbReference>
<dbReference type="GO" id="GO:0009279">
    <property type="term" value="C:cell outer membrane"/>
    <property type="evidence" value="ECO:0007669"/>
    <property type="project" value="UniProtKB-SubCell"/>
</dbReference>
<dbReference type="GO" id="GO:0046930">
    <property type="term" value="C:pore complex"/>
    <property type="evidence" value="ECO:0007669"/>
    <property type="project" value="UniProtKB-KW"/>
</dbReference>
<dbReference type="GO" id="GO:0015288">
    <property type="term" value="F:porin activity"/>
    <property type="evidence" value="ECO:0007669"/>
    <property type="project" value="UniProtKB-KW"/>
</dbReference>
<dbReference type="GO" id="GO:0006865">
    <property type="term" value="P:amino acid transport"/>
    <property type="evidence" value="ECO:0007669"/>
    <property type="project" value="UniProtKB-KW"/>
</dbReference>
<dbReference type="GO" id="GO:0008643">
    <property type="term" value="P:carbohydrate transport"/>
    <property type="evidence" value="ECO:0007669"/>
    <property type="project" value="InterPro"/>
</dbReference>
<dbReference type="GO" id="GO:0006811">
    <property type="term" value="P:monoatomic ion transport"/>
    <property type="evidence" value="ECO:0007669"/>
    <property type="project" value="UniProtKB-KW"/>
</dbReference>
<dbReference type="Gene3D" id="2.40.160.180">
    <property type="entry name" value="Carbohydrate-selective porin OprB"/>
    <property type="match status" value="1"/>
</dbReference>
<dbReference type="InterPro" id="IPR007049">
    <property type="entry name" value="Carb-sel_porin_OprB"/>
</dbReference>
<dbReference type="InterPro" id="IPR038673">
    <property type="entry name" value="OprB_sf"/>
</dbReference>
<dbReference type="Pfam" id="PF04966">
    <property type="entry name" value="OprB"/>
    <property type="match status" value="1"/>
</dbReference>
<accession>B0B7U1</accession>
<feature type="signal peptide" evidence="2">
    <location>
        <begin position="1"/>
        <end position="22"/>
    </location>
</feature>
<feature type="chain" id="PRO_0000363186" description="Porin AaxA">
    <location>
        <begin position="23"/>
        <end position="461"/>
    </location>
</feature>